<proteinExistence type="inferred from homology"/>
<dbReference type="EC" id="2.4.1.182" evidence="1"/>
<dbReference type="EMBL" id="CP000826">
    <property type="protein sequence ID" value="ABV42873.1"/>
    <property type="molecule type" value="Genomic_DNA"/>
</dbReference>
<dbReference type="SMR" id="A8GID3"/>
<dbReference type="STRING" id="399741.Spro_3777"/>
<dbReference type="CAZy" id="GT19">
    <property type="family name" value="Glycosyltransferase Family 19"/>
</dbReference>
<dbReference type="KEGG" id="spe:Spro_3777"/>
<dbReference type="eggNOG" id="COG0763">
    <property type="taxonomic scope" value="Bacteria"/>
</dbReference>
<dbReference type="HOGENOM" id="CLU_036577_3_0_6"/>
<dbReference type="OrthoDB" id="9801642at2"/>
<dbReference type="UniPathway" id="UPA00359">
    <property type="reaction ID" value="UER00481"/>
</dbReference>
<dbReference type="GO" id="GO:0016020">
    <property type="term" value="C:membrane"/>
    <property type="evidence" value="ECO:0007669"/>
    <property type="project" value="GOC"/>
</dbReference>
<dbReference type="GO" id="GO:0008915">
    <property type="term" value="F:lipid-A-disaccharide synthase activity"/>
    <property type="evidence" value="ECO:0007669"/>
    <property type="project" value="UniProtKB-UniRule"/>
</dbReference>
<dbReference type="GO" id="GO:0005543">
    <property type="term" value="F:phospholipid binding"/>
    <property type="evidence" value="ECO:0007669"/>
    <property type="project" value="TreeGrafter"/>
</dbReference>
<dbReference type="GO" id="GO:0009245">
    <property type="term" value="P:lipid A biosynthetic process"/>
    <property type="evidence" value="ECO:0007669"/>
    <property type="project" value="UniProtKB-UniRule"/>
</dbReference>
<dbReference type="HAMAP" id="MF_00392">
    <property type="entry name" value="LpxB"/>
    <property type="match status" value="1"/>
</dbReference>
<dbReference type="InterPro" id="IPR003835">
    <property type="entry name" value="Glyco_trans_19"/>
</dbReference>
<dbReference type="NCBIfam" id="TIGR00215">
    <property type="entry name" value="lpxB"/>
    <property type="match status" value="1"/>
</dbReference>
<dbReference type="PANTHER" id="PTHR30372">
    <property type="entry name" value="LIPID-A-DISACCHARIDE SYNTHASE"/>
    <property type="match status" value="1"/>
</dbReference>
<dbReference type="PANTHER" id="PTHR30372:SF4">
    <property type="entry name" value="LIPID-A-DISACCHARIDE SYNTHASE, MITOCHONDRIAL-RELATED"/>
    <property type="match status" value="1"/>
</dbReference>
<dbReference type="Pfam" id="PF02684">
    <property type="entry name" value="LpxB"/>
    <property type="match status" value="1"/>
</dbReference>
<dbReference type="SUPFAM" id="SSF53756">
    <property type="entry name" value="UDP-Glycosyltransferase/glycogen phosphorylase"/>
    <property type="match status" value="1"/>
</dbReference>
<reference key="1">
    <citation type="submission" date="2007-09" db="EMBL/GenBank/DDBJ databases">
        <title>Complete sequence of chromosome of Serratia proteamaculans 568.</title>
        <authorList>
            <consortium name="US DOE Joint Genome Institute"/>
            <person name="Copeland A."/>
            <person name="Lucas S."/>
            <person name="Lapidus A."/>
            <person name="Barry K."/>
            <person name="Glavina del Rio T."/>
            <person name="Dalin E."/>
            <person name="Tice H."/>
            <person name="Pitluck S."/>
            <person name="Chain P."/>
            <person name="Malfatti S."/>
            <person name="Shin M."/>
            <person name="Vergez L."/>
            <person name="Schmutz J."/>
            <person name="Larimer F."/>
            <person name="Land M."/>
            <person name="Hauser L."/>
            <person name="Kyrpides N."/>
            <person name="Kim E."/>
            <person name="Taghavi S."/>
            <person name="Newman L."/>
            <person name="Vangronsveld J."/>
            <person name="van der Lelie D."/>
            <person name="Richardson P."/>
        </authorList>
    </citation>
    <scope>NUCLEOTIDE SEQUENCE [LARGE SCALE GENOMIC DNA]</scope>
    <source>
        <strain>568</strain>
    </source>
</reference>
<name>LPXB_SERP5</name>
<evidence type="ECO:0000255" key="1">
    <source>
        <dbReference type="HAMAP-Rule" id="MF_00392"/>
    </source>
</evidence>
<comment type="function">
    <text evidence="1">Condensation of UDP-2,3-diacylglucosamine and 2,3-diacylglucosamine-1-phosphate to form lipid A disaccharide, a precursor of lipid A, a phosphorylated glycolipid that anchors the lipopolysaccharide to the outer membrane of the cell.</text>
</comment>
<comment type="catalytic activity">
    <reaction evidence="1">
        <text>2-N,3-O-bis[(3R)-3-hydroxytetradecanoyl]-alpha-D-glucosaminyl 1-phosphate + UDP-2-N,3-O-bis[(3R)-3-hydroxytetradecanoyl]-alpha-D-glucosamine = lipid A disaccharide (E. coli) + UDP + H(+)</text>
        <dbReference type="Rhea" id="RHEA:22668"/>
        <dbReference type="ChEBI" id="CHEBI:15378"/>
        <dbReference type="ChEBI" id="CHEBI:57957"/>
        <dbReference type="ChEBI" id="CHEBI:58223"/>
        <dbReference type="ChEBI" id="CHEBI:58466"/>
        <dbReference type="ChEBI" id="CHEBI:78847"/>
    </reaction>
</comment>
<comment type="catalytic activity">
    <reaction evidence="1">
        <text>a lipid X + a UDP-2-N,3-O-bis[(3R)-3-hydroxyacyl]-alpha-D-glucosamine = a lipid A disaccharide + UDP + H(+)</text>
        <dbReference type="Rhea" id="RHEA:67828"/>
        <dbReference type="ChEBI" id="CHEBI:15378"/>
        <dbReference type="ChEBI" id="CHEBI:58223"/>
        <dbReference type="ChEBI" id="CHEBI:137748"/>
        <dbReference type="ChEBI" id="CHEBI:176338"/>
        <dbReference type="ChEBI" id="CHEBI:176343"/>
        <dbReference type="EC" id="2.4.1.182"/>
    </reaction>
</comment>
<comment type="pathway">
    <text evidence="1">Glycolipid biosynthesis; lipid IV(A) biosynthesis; lipid IV(A) from (3R)-3-hydroxytetradecanoyl-[acyl-carrier-protein] and UDP-N-acetyl-alpha-D-glucosamine: step 5/6.</text>
</comment>
<comment type="similarity">
    <text evidence="1">Belongs to the LpxB family.</text>
</comment>
<keyword id="KW-0328">Glycosyltransferase</keyword>
<keyword id="KW-0441">Lipid A biosynthesis</keyword>
<keyword id="KW-0444">Lipid biosynthesis</keyword>
<keyword id="KW-0443">Lipid metabolism</keyword>
<keyword id="KW-0808">Transferase</keyword>
<feature type="chain" id="PRO_1000060774" description="Lipid-A-disaccharide synthase">
    <location>
        <begin position="1"/>
        <end position="382"/>
    </location>
</feature>
<gene>
    <name evidence="1" type="primary">lpxB</name>
    <name type="ordered locus">Spro_3777</name>
</gene>
<accession>A8GID3</accession>
<organism>
    <name type="scientific">Serratia proteamaculans (strain 568)</name>
    <dbReference type="NCBI Taxonomy" id="399741"/>
    <lineage>
        <taxon>Bacteria</taxon>
        <taxon>Pseudomonadati</taxon>
        <taxon>Pseudomonadota</taxon>
        <taxon>Gammaproteobacteria</taxon>
        <taxon>Enterobacterales</taxon>
        <taxon>Yersiniaceae</taxon>
        <taxon>Serratia</taxon>
    </lineage>
</organism>
<sequence>MQNRPLTIGLVAGETSGDILGAGLIRALKAQIPDARFVGVAGPLMQAEGCETWYEMEELAVMGVVEVLERLPRLLKIRKDLTRRFSDLAPDVFVGIDAPDFNITLEGRLKQRGIRTIHYVSPSVWAWRQKRVFKIGKATDLVLAFLPFEKAFYDRFNVPCRFIGHTMADAMPLQPDKLAARAKLGIAADARCLALLPGSRGAEVEMLSADFLKTAQLLRTRYPELELVVPLVNAKRREQFERIKAEVAPELRVHLLNGQGREAMIASDAALLASGTAALECMLAKCPMVVGYRMKPFTFWIAQRLVKTPYVSLPNLLAGREIVTELLQHDCVPDKLAASVMPLLEDSPQTDELKQTFLTLHQSIRCGADEQAAQAVLELAKA</sequence>
<protein>
    <recommendedName>
        <fullName evidence="1">Lipid-A-disaccharide synthase</fullName>
        <ecNumber evidence="1">2.4.1.182</ecNumber>
    </recommendedName>
</protein>